<protein>
    <recommendedName>
        <fullName>Mitochondrial inner membrane protease subunit 1</fullName>
        <ecNumber>3.4.21.-</ecNumber>
    </recommendedName>
    <alternativeName>
        <fullName>IMP1-like protein</fullName>
    </alternativeName>
</protein>
<sequence length="166" mass="18504">MLRGVLGKTFRLVGYTIQYGCIAHCAFEYVGGVVMCSGPSMEPTIQNSDIVFAENLSRHFYGIQRGDIVIAKSPSDPKSNICKRVIGLEGDKILTTSPSDFFKSHSYVPMGHVWLEGDNLQNSTDSRCYGPIPYGLIRGRIFFKIWPLSDFGFLRASPNGHRFSDD</sequence>
<reference key="1">
    <citation type="journal article" date="2004" name="Nat. Genet.">
        <title>Complete sequencing and characterization of 21,243 full-length human cDNAs.</title>
        <authorList>
            <person name="Ota T."/>
            <person name="Suzuki Y."/>
            <person name="Nishikawa T."/>
            <person name="Otsuki T."/>
            <person name="Sugiyama T."/>
            <person name="Irie R."/>
            <person name="Wakamatsu A."/>
            <person name="Hayashi K."/>
            <person name="Sato H."/>
            <person name="Nagai K."/>
            <person name="Kimura K."/>
            <person name="Makita H."/>
            <person name="Sekine M."/>
            <person name="Obayashi M."/>
            <person name="Nishi T."/>
            <person name="Shibahara T."/>
            <person name="Tanaka T."/>
            <person name="Ishii S."/>
            <person name="Yamamoto J."/>
            <person name="Saito K."/>
            <person name="Kawai Y."/>
            <person name="Isono Y."/>
            <person name="Nakamura Y."/>
            <person name="Nagahari K."/>
            <person name="Murakami K."/>
            <person name="Yasuda T."/>
            <person name="Iwayanagi T."/>
            <person name="Wagatsuma M."/>
            <person name="Shiratori A."/>
            <person name="Sudo H."/>
            <person name="Hosoiri T."/>
            <person name="Kaku Y."/>
            <person name="Kodaira H."/>
            <person name="Kondo H."/>
            <person name="Sugawara M."/>
            <person name="Takahashi M."/>
            <person name="Kanda K."/>
            <person name="Yokoi T."/>
            <person name="Furuya T."/>
            <person name="Kikkawa E."/>
            <person name="Omura Y."/>
            <person name="Abe K."/>
            <person name="Kamihara K."/>
            <person name="Katsuta N."/>
            <person name="Sato K."/>
            <person name="Tanikawa M."/>
            <person name="Yamazaki M."/>
            <person name="Ninomiya K."/>
            <person name="Ishibashi T."/>
            <person name="Yamashita H."/>
            <person name="Murakawa K."/>
            <person name="Fujimori K."/>
            <person name="Tanai H."/>
            <person name="Kimata M."/>
            <person name="Watanabe M."/>
            <person name="Hiraoka S."/>
            <person name="Chiba Y."/>
            <person name="Ishida S."/>
            <person name="Ono Y."/>
            <person name="Takiguchi S."/>
            <person name="Watanabe S."/>
            <person name="Yosida M."/>
            <person name="Hotuta T."/>
            <person name="Kusano J."/>
            <person name="Kanehori K."/>
            <person name="Takahashi-Fujii A."/>
            <person name="Hara H."/>
            <person name="Tanase T.-O."/>
            <person name="Nomura Y."/>
            <person name="Togiya S."/>
            <person name="Komai F."/>
            <person name="Hara R."/>
            <person name="Takeuchi K."/>
            <person name="Arita M."/>
            <person name="Imose N."/>
            <person name="Musashino K."/>
            <person name="Yuuki H."/>
            <person name="Oshima A."/>
            <person name="Sasaki N."/>
            <person name="Aotsuka S."/>
            <person name="Yoshikawa Y."/>
            <person name="Matsunawa H."/>
            <person name="Ichihara T."/>
            <person name="Shiohata N."/>
            <person name="Sano S."/>
            <person name="Moriya S."/>
            <person name="Momiyama H."/>
            <person name="Satoh N."/>
            <person name="Takami S."/>
            <person name="Terashima Y."/>
            <person name="Suzuki O."/>
            <person name="Nakagawa S."/>
            <person name="Senoh A."/>
            <person name="Mizoguchi H."/>
            <person name="Goto Y."/>
            <person name="Shimizu F."/>
            <person name="Wakebe H."/>
            <person name="Hishigaki H."/>
            <person name="Watanabe T."/>
            <person name="Sugiyama A."/>
            <person name="Takemoto M."/>
            <person name="Kawakami B."/>
            <person name="Yamazaki M."/>
            <person name="Watanabe K."/>
            <person name="Kumagai A."/>
            <person name="Itakura S."/>
            <person name="Fukuzumi Y."/>
            <person name="Fujimori Y."/>
            <person name="Komiyama M."/>
            <person name="Tashiro H."/>
            <person name="Tanigami A."/>
            <person name="Fujiwara T."/>
            <person name="Ono T."/>
            <person name="Yamada K."/>
            <person name="Fujii Y."/>
            <person name="Ozaki K."/>
            <person name="Hirao M."/>
            <person name="Ohmori Y."/>
            <person name="Kawabata A."/>
            <person name="Hikiji T."/>
            <person name="Kobatake N."/>
            <person name="Inagaki H."/>
            <person name="Ikema Y."/>
            <person name="Okamoto S."/>
            <person name="Okitani R."/>
            <person name="Kawakami T."/>
            <person name="Noguchi S."/>
            <person name="Itoh T."/>
            <person name="Shigeta K."/>
            <person name="Senba T."/>
            <person name="Matsumura K."/>
            <person name="Nakajima Y."/>
            <person name="Mizuno T."/>
            <person name="Morinaga M."/>
            <person name="Sasaki M."/>
            <person name="Togashi T."/>
            <person name="Oyama M."/>
            <person name="Hata H."/>
            <person name="Watanabe M."/>
            <person name="Komatsu T."/>
            <person name="Mizushima-Sugano J."/>
            <person name="Satoh T."/>
            <person name="Shirai Y."/>
            <person name="Takahashi Y."/>
            <person name="Nakagawa K."/>
            <person name="Okumura K."/>
            <person name="Nagase T."/>
            <person name="Nomura N."/>
            <person name="Kikuchi H."/>
            <person name="Masuho Y."/>
            <person name="Yamashita R."/>
            <person name="Nakai K."/>
            <person name="Yada T."/>
            <person name="Nakamura Y."/>
            <person name="Ohara O."/>
            <person name="Isogai T."/>
            <person name="Sugano S."/>
        </authorList>
    </citation>
    <scope>NUCLEOTIDE SEQUENCE [LARGE SCALE MRNA]</scope>
    <source>
        <tissue>Cerebellum</tissue>
    </source>
</reference>
<reference key="2">
    <citation type="journal article" date="2006" name="Nature">
        <title>Human chromosome 11 DNA sequence and analysis including novel gene identification.</title>
        <authorList>
            <person name="Taylor T.D."/>
            <person name="Noguchi H."/>
            <person name="Totoki Y."/>
            <person name="Toyoda A."/>
            <person name="Kuroki Y."/>
            <person name="Dewar K."/>
            <person name="Lloyd C."/>
            <person name="Itoh T."/>
            <person name="Takeda T."/>
            <person name="Kim D.-W."/>
            <person name="She X."/>
            <person name="Barlow K.F."/>
            <person name="Bloom T."/>
            <person name="Bruford E."/>
            <person name="Chang J.L."/>
            <person name="Cuomo C.A."/>
            <person name="Eichler E."/>
            <person name="FitzGerald M.G."/>
            <person name="Jaffe D.B."/>
            <person name="LaButti K."/>
            <person name="Nicol R."/>
            <person name="Park H.-S."/>
            <person name="Seaman C."/>
            <person name="Sougnez C."/>
            <person name="Yang X."/>
            <person name="Zimmer A.R."/>
            <person name="Zody M.C."/>
            <person name="Birren B.W."/>
            <person name="Nusbaum C."/>
            <person name="Fujiyama A."/>
            <person name="Hattori M."/>
            <person name="Rogers J."/>
            <person name="Lander E.S."/>
            <person name="Sakaki Y."/>
        </authorList>
    </citation>
    <scope>NUCLEOTIDE SEQUENCE [LARGE SCALE GENOMIC DNA]</scope>
</reference>
<reference key="3">
    <citation type="submission" date="2005-09" db="EMBL/GenBank/DDBJ databases">
        <authorList>
            <person name="Mural R.J."/>
            <person name="Istrail S."/>
            <person name="Sutton G.G."/>
            <person name="Florea L."/>
            <person name="Halpern A.L."/>
            <person name="Mobarry C.M."/>
            <person name="Lippert R."/>
            <person name="Walenz B."/>
            <person name="Shatkay H."/>
            <person name="Dew I."/>
            <person name="Miller J.R."/>
            <person name="Flanigan M.J."/>
            <person name="Edwards N.J."/>
            <person name="Bolanos R."/>
            <person name="Fasulo D."/>
            <person name="Halldorsson B.V."/>
            <person name="Hannenhalli S."/>
            <person name="Turner R."/>
            <person name="Yooseph S."/>
            <person name="Lu F."/>
            <person name="Nusskern D.R."/>
            <person name="Shue B.C."/>
            <person name="Zheng X.H."/>
            <person name="Zhong F."/>
            <person name="Delcher A.L."/>
            <person name="Huson D.H."/>
            <person name="Kravitz S.A."/>
            <person name="Mouchard L."/>
            <person name="Reinert K."/>
            <person name="Remington K.A."/>
            <person name="Clark A.G."/>
            <person name="Waterman M.S."/>
            <person name="Eichler E.E."/>
            <person name="Adams M.D."/>
            <person name="Hunkapiller M.W."/>
            <person name="Myers E.W."/>
            <person name="Venter J.C."/>
        </authorList>
    </citation>
    <scope>NUCLEOTIDE SEQUENCE [LARGE SCALE GENOMIC DNA]</scope>
</reference>
<reference key="4">
    <citation type="journal article" date="2004" name="Genome Res.">
        <title>The status, quality, and expansion of the NIH full-length cDNA project: the Mammalian Gene Collection (MGC).</title>
        <authorList>
            <consortium name="The MGC Project Team"/>
        </authorList>
    </citation>
    <scope>NUCLEOTIDE SEQUENCE [LARGE SCALE MRNA]</scope>
    <source>
        <tissue>Eye</tissue>
    </source>
</reference>
<reference key="5">
    <citation type="journal article" date="2005" name="Mol. Biol. Cell">
        <title>Mature DIABLO/Smac is produced by the IMP protease complex on the mitochondrial inner membrane.</title>
        <authorList>
            <person name="Burri L."/>
            <person name="Strahm Y."/>
            <person name="Hawkins C.J."/>
            <person name="Gentle I.E."/>
            <person name="Puryer M.A."/>
            <person name="Verhagen A."/>
            <person name="Callus B."/>
            <person name="Vaux D."/>
            <person name="Lithgow T."/>
        </authorList>
    </citation>
    <scope>FUNCTION</scope>
    <scope>SUBCELLULAR LOCATION</scope>
</reference>
<name>IMP1L_HUMAN</name>
<dbReference type="EC" id="3.4.21.-"/>
<dbReference type="EMBL" id="AK057788">
    <property type="protein sequence ID" value="BAB71573.1"/>
    <property type="molecule type" value="mRNA"/>
</dbReference>
<dbReference type="EMBL" id="AL133295">
    <property type="protein sequence ID" value="CAC39221.1"/>
    <property type="status" value="ALT_SEQ"/>
    <property type="molecule type" value="Genomic_DNA"/>
</dbReference>
<dbReference type="EMBL" id="CH471064">
    <property type="protein sequence ID" value="EAW68239.1"/>
    <property type="molecule type" value="Genomic_DNA"/>
</dbReference>
<dbReference type="EMBL" id="CH471064">
    <property type="protein sequence ID" value="EAW68240.1"/>
    <property type="molecule type" value="Genomic_DNA"/>
</dbReference>
<dbReference type="EMBL" id="BC023595">
    <property type="protein sequence ID" value="AAH23595.1"/>
    <property type="molecule type" value="mRNA"/>
</dbReference>
<dbReference type="CCDS" id="CCDS7874.1"/>
<dbReference type="RefSeq" id="NP_001291203.1">
    <property type="nucleotide sequence ID" value="NM_001304274.2"/>
</dbReference>
<dbReference type="RefSeq" id="NP_659418.1">
    <property type="nucleotide sequence ID" value="NM_144981.3"/>
</dbReference>
<dbReference type="RefSeq" id="XP_005252869.1">
    <property type="nucleotide sequence ID" value="XM_005252812.4"/>
</dbReference>
<dbReference type="RefSeq" id="XP_011518244.1">
    <property type="nucleotide sequence ID" value="XM_011519942.2"/>
</dbReference>
<dbReference type="RefSeq" id="XP_011518245.1">
    <property type="nucleotide sequence ID" value="XM_011519943.3"/>
</dbReference>
<dbReference type="RefSeq" id="XP_011518246.1">
    <property type="nucleotide sequence ID" value="XM_011519944.2"/>
</dbReference>
<dbReference type="RefSeq" id="XP_011518247.1">
    <property type="nucleotide sequence ID" value="XM_011519945.3"/>
</dbReference>
<dbReference type="RefSeq" id="XP_011518248.1">
    <property type="nucleotide sequence ID" value="XM_011519946.3"/>
</dbReference>
<dbReference type="RefSeq" id="XP_011518249.1">
    <property type="nucleotide sequence ID" value="XM_011519947.3"/>
</dbReference>
<dbReference type="RefSeq" id="XP_016872794.1">
    <property type="nucleotide sequence ID" value="XM_017017305.2"/>
</dbReference>
<dbReference type="RefSeq" id="XP_047282476.1">
    <property type="nucleotide sequence ID" value="XM_047426520.1"/>
</dbReference>
<dbReference type="RefSeq" id="XP_047282477.1">
    <property type="nucleotide sequence ID" value="XM_047426521.1"/>
</dbReference>
<dbReference type="RefSeq" id="XP_054223925.1">
    <property type="nucleotide sequence ID" value="XM_054367950.1"/>
</dbReference>
<dbReference type="RefSeq" id="XP_054223926.1">
    <property type="nucleotide sequence ID" value="XM_054367951.1"/>
</dbReference>
<dbReference type="RefSeq" id="XP_054223927.1">
    <property type="nucleotide sequence ID" value="XM_054367952.1"/>
</dbReference>
<dbReference type="RefSeq" id="XP_054223928.1">
    <property type="nucleotide sequence ID" value="XM_054367953.1"/>
</dbReference>
<dbReference type="RefSeq" id="XP_054223929.1">
    <property type="nucleotide sequence ID" value="XM_054367954.1"/>
</dbReference>
<dbReference type="RefSeq" id="XP_054223930.1">
    <property type="nucleotide sequence ID" value="XM_054367955.1"/>
</dbReference>
<dbReference type="RefSeq" id="XP_054223931.1">
    <property type="nucleotide sequence ID" value="XM_054367956.1"/>
</dbReference>
<dbReference type="RefSeq" id="XP_054223932.1">
    <property type="nucleotide sequence ID" value="XM_054367957.1"/>
</dbReference>
<dbReference type="RefSeq" id="XP_054223933.1">
    <property type="nucleotide sequence ID" value="XM_054367958.1"/>
</dbReference>
<dbReference type="SMR" id="Q96LU5"/>
<dbReference type="BioGRID" id="128195">
    <property type="interactions" value="247"/>
</dbReference>
<dbReference type="ComplexPortal" id="CPX-6244">
    <property type="entry name" value="Mitochondrial inner membrane peptidase complex"/>
</dbReference>
<dbReference type="FunCoup" id="Q96LU5">
    <property type="interactions" value="1633"/>
</dbReference>
<dbReference type="IntAct" id="Q96LU5">
    <property type="interactions" value="242"/>
</dbReference>
<dbReference type="MINT" id="Q96LU5"/>
<dbReference type="STRING" id="9606.ENSP00000278200"/>
<dbReference type="MEROPS" id="S26.002"/>
<dbReference type="iPTMnet" id="Q96LU5"/>
<dbReference type="PhosphoSitePlus" id="Q96LU5"/>
<dbReference type="BioMuta" id="IMMP1L"/>
<dbReference type="DMDM" id="74752020"/>
<dbReference type="jPOST" id="Q96LU5"/>
<dbReference type="MassIVE" id="Q96LU5"/>
<dbReference type="PaxDb" id="9606-ENSP00000278200"/>
<dbReference type="PeptideAtlas" id="Q96LU5"/>
<dbReference type="ProteomicsDB" id="77251"/>
<dbReference type="Pumba" id="Q96LU5"/>
<dbReference type="Antibodypedia" id="49000">
    <property type="antibodies" value="83 antibodies from 24 providers"/>
</dbReference>
<dbReference type="DNASU" id="196294"/>
<dbReference type="Ensembl" id="ENST00000278200.5">
    <property type="protein sequence ID" value="ENSP00000278200.1"/>
    <property type="gene ID" value="ENSG00000148950.11"/>
</dbReference>
<dbReference type="Ensembl" id="ENST00000532287.6">
    <property type="protein sequence ID" value="ENSP00000435576.1"/>
    <property type="gene ID" value="ENSG00000148950.11"/>
</dbReference>
<dbReference type="GeneID" id="196294"/>
<dbReference type="KEGG" id="hsa:196294"/>
<dbReference type="MANE-Select" id="ENST00000532287.6">
    <property type="protein sequence ID" value="ENSP00000435576.1"/>
    <property type="RefSeq nucleotide sequence ID" value="NM_001304274.2"/>
    <property type="RefSeq protein sequence ID" value="NP_001291203.1"/>
</dbReference>
<dbReference type="UCSC" id="uc001msy.1">
    <property type="organism name" value="human"/>
</dbReference>
<dbReference type="AGR" id="HGNC:26317"/>
<dbReference type="CTD" id="196294"/>
<dbReference type="DisGeNET" id="196294"/>
<dbReference type="GeneCards" id="IMMP1L"/>
<dbReference type="HGNC" id="HGNC:26317">
    <property type="gene designation" value="IMMP1L"/>
</dbReference>
<dbReference type="HPA" id="ENSG00000148950">
    <property type="expression patterns" value="Low tissue specificity"/>
</dbReference>
<dbReference type="MIM" id="612323">
    <property type="type" value="gene"/>
</dbReference>
<dbReference type="neXtProt" id="NX_Q96LU5"/>
<dbReference type="OpenTargets" id="ENSG00000148950"/>
<dbReference type="PharmGKB" id="PA142671655"/>
<dbReference type="VEuPathDB" id="HostDB:ENSG00000148950"/>
<dbReference type="eggNOG" id="KOG0171">
    <property type="taxonomic scope" value="Eukaryota"/>
</dbReference>
<dbReference type="GeneTree" id="ENSGT00550000075025"/>
<dbReference type="HOGENOM" id="CLU_028723_4_3_1"/>
<dbReference type="InParanoid" id="Q96LU5"/>
<dbReference type="OMA" id="LCKGPSM"/>
<dbReference type="OrthoDB" id="308440at2759"/>
<dbReference type="PAN-GO" id="Q96LU5">
    <property type="GO annotations" value="2 GO annotations based on evolutionary models"/>
</dbReference>
<dbReference type="PhylomeDB" id="Q96LU5"/>
<dbReference type="TreeFam" id="TF315083"/>
<dbReference type="PathwayCommons" id="Q96LU5"/>
<dbReference type="SignaLink" id="Q96LU5"/>
<dbReference type="BioGRID-ORCS" id="196294">
    <property type="hits" value="10 hits in 1116 CRISPR screens"/>
</dbReference>
<dbReference type="ChiTaRS" id="IMMP1L">
    <property type="organism name" value="human"/>
</dbReference>
<dbReference type="GenomeRNAi" id="196294"/>
<dbReference type="Pharos" id="Q96LU5">
    <property type="development level" value="Tbio"/>
</dbReference>
<dbReference type="PRO" id="PR:Q96LU5"/>
<dbReference type="Proteomes" id="UP000005640">
    <property type="component" value="Chromosome 11"/>
</dbReference>
<dbReference type="RNAct" id="Q96LU5">
    <property type="molecule type" value="protein"/>
</dbReference>
<dbReference type="Bgee" id="ENSG00000148950">
    <property type="expression patterns" value="Expressed in endothelial cell and 185 other cell types or tissues"/>
</dbReference>
<dbReference type="ExpressionAtlas" id="Q96LU5">
    <property type="expression patterns" value="baseline and differential"/>
</dbReference>
<dbReference type="GO" id="GO:0005743">
    <property type="term" value="C:mitochondrial inner membrane"/>
    <property type="evidence" value="ECO:0000303"/>
    <property type="project" value="ComplexPortal"/>
</dbReference>
<dbReference type="GO" id="GO:0042720">
    <property type="term" value="C:mitochondrial inner membrane peptidase complex"/>
    <property type="evidence" value="ECO:0000318"/>
    <property type="project" value="GO_Central"/>
</dbReference>
<dbReference type="GO" id="GO:0005739">
    <property type="term" value="C:mitochondrion"/>
    <property type="evidence" value="ECO:0000314"/>
    <property type="project" value="HPA"/>
</dbReference>
<dbReference type="GO" id="GO:0004252">
    <property type="term" value="F:serine-type endopeptidase activity"/>
    <property type="evidence" value="ECO:0007669"/>
    <property type="project" value="InterPro"/>
</dbReference>
<dbReference type="GO" id="GO:0006627">
    <property type="term" value="P:protein processing involved in protein targeting to mitochondrion"/>
    <property type="evidence" value="ECO:0000318"/>
    <property type="project" value="GO_Central"/>
</dbReference>
<dbReference type="GO" id="GO:0006465">
    <property type="term" value="P:signal peptide processing"/>
    <property type="evidence" value="ECO:0000303"/>
    <property type="project" value="ComplexPortal"/>
</dbReference>
<dbReference type="CDD" id="cd06530">
    <property type="entry name" value="S26_SPase_I"/>
    <property type="match status" value="1"/>
</dbReference>
<dbReference type="FunFam" id="2.10.109.10:FF:000010">
    <property type="entry name" value="Mitochondrial inner membrane protease subunit"/>
    <property type="match status" value="1"/>
</dbReference>
<dbReference type="Gene3D" id="2.10.109.10">
    <property type="entry name" value="Umud Fragment, subunit A"/>
    <property type="match status" value="1"/>
</dbReference>
<dbReference type="InterPro" id="IPR036286">
    <property type="entry name" value="LexA/Signal_pep-like_sf"/>
</dbReference>
<dbReference type="InterPro" id="IPR052064">
    <property type="entry name" value="Mito_IMP1_subunit"/>
</dbReference>
<dbReference type="InterPro" id="IPR000223">
    <property type="entry name" value="Pept_S26A_signal_pept_1"/>
</dbReference>
<dbReference type="InterPro" id="IPR019533">
    <property type="entry name" value="Peptidase_S26"/>
</dbReference>
<dbReference type="NCBIfam" id="TIGR02227">
    <property type="entry name" value="sigpep_I_bact"/>
    <property type="match status" value="1"/>
</dbReference>
<dbReference type="PANTHER" id="PTHR12383:SF33">
    <property type="entry name" value="MITOCHONDRIAL INNER MEMBRANE PROTEASE SUBUNIT 1"/>
    <property type="match status" value="1"/>
</dbReference>
<dbReference type="PANTHER" id="PTHR12383">
    <property type="entry name" value="PROTEASE FAMILY S26 MITOCHONDRIAL INNER MEMBRANE PROTEASE-RELATED"/>
    <property type="match status" value="1"/>
</dbReference>
<dbReference type="Pfam" id="PF10502">
    <property type="entry name" value="Peptidase_S26"/>
    <property type="match status" value="2"/>
</dbReference>
<dbReference type="PRINTS" id="PR00727">
    <property type="entry name" value="LEADERPTASE"/>
</dbReference>
<dbReference type="SUPFAM" id="SSF51306">
    <property type="entry name" value="LexA/Signal peptidase"/>
    <property type="match status" value="1"/>
</dbReference>
<gene>
    <name type="primary">IMMP1L</name>
</gene>
<organism>
    <name type="scientific">Homo sapiens</name>
    <name type="common">Human</name>
    <dbReference type="NCBI Taxonomy" id="9606"/>
    <lineage>
        <taxon>Eukaryota</taxon>
        <taxon>Metazoa</taxon>
        <taxon>Chordata</taxon>
        <taxon>Craniata</taxon>
        <taxon>Vertebrata</taxon>
        <taxon>Euteleostomi</taxon>
        <taxon>Mammalia</taxon>
        <taxon>Eutheria</taxon>
        <taxon>Euarchontoglires</taxon>
        <taxon>Primates</taxon>
        <taxon>Haplorrhini</taxon>
        <taxon>Catarrhini</taxon>
        <taxon>Hominidae</taxon>
        <taxon>Homo</taxon>
    </lineage>
</organism>
<accession>Q96LU5</accession>
<accession>D3DQZ7</accession>
<accession>Q96SH9</accession>
<keyword id="KW-0378">Hydrolase</keyword>
<keyword id="KW-0472">Membrane</keyword>
<keyword id="KW-0496">Mitochondrion</keyword>
<keyword id="KW-0999">Mitochondrion inner membrane</keyword>
<keyword id="KW-0645">Protease</keyword>
<keyword id="KW-1267">Proteomics identification</keyword>
<keyword id="KW-1185">Reference proteome</keyword>
<evidence type="ECO:0000250" key="1"/>
<evidence type="ECO:0000269" key="2">
    <source>
    </source>
</evidence>
<evidence type="ECO:0000305" key="3"/>
<evidence type="ECO:0000305" key="4">
    <source>
    </source>
</evidence>
<proteinExistence type="evidence at protein level"/>
<feature type="chain" id="PRO_0000259573" description="Mitochondrial inner membrane protease subunit 1">
    <location>
        <begin position="1"/>
        <end position="166"/>
    </location>
</feature>
<feature type="active site" evidence="1">
    <location>
        <position position="40"/>
    </location>
</feature>
<feature type="active site" evidence="1">
    <location>
        <position position="83"/>
    </location>
</feature>
<comment type="function">
    <text evidence="2">Catalyzes the removal of transit peptides required for the targeting of proteins from the mitochondrial matrix, across the inner membrane, into the inter-membrane space. Known to process the nuclear encoded protein DIABLO.</text>
</comment>
<comment type="subunit">
    <text evidence="1">Heterodimer of 2 subunits, IMMPL1 and IMMPL2.</text>
</comment>
<comment type="subcellular location">
    <subcellularLocation>
        <location evidence="4">Mitochondrion inner membrane</location>
    </subcellularLocation>
</comment>
<comment type="similarity">
    <text evidence="3">Belongs to the peptidase S26 family. IMP1 subfamily.</text>
</comment>
<comment type="sequence caution" evidence="3">
    <conflict type="erroneous gene model prediction">
        <sequence resource="EMBL-CDS" id="CAC39221"/>
    </conflict>
</comment>